<keyword id="KW-0025">Alternative splicing</keyword>
<keyword id="KW-1267">Proteomics identification</keyword>
<keyword id="KW-1185">Reference proteome</keyword>
<feature type="chain" id="PRO_0000089531" description="Uncharacterized protein C6orf136">
    <location>
        <begin position="1"/>
        <end position="315"/>
    </location>
</feature>
<feature type="splice variant" id="VSP_014618" description="In isoform 2." evidence="1">
    <location>
        <begin position="1"/>
        <end position="143"/>
    </location>
</feature>
<feature type="splice variant" id="VSP_046640" description="In isoform 4." evidence="2">
    <original>Q</original>
    <variation>QVSGGEEGGRRGGGERPSSKPVRGAERALGSAQAQRHPPPLPTCALQRVDRLGVAGAGGRRCRACRARTSVLPGLRAVRRGQGQAAGRVCVAPDSPRLPVPRGDLKGRGREIRSPAAAPSRSSPAQTRPAGRPQQPARLALGERSWQEGRPVCTRFGPLRPGWQDGHAPSRDGASRTPSGTE</variation>
    <location>
        <position position="24"/>
    </location>
</feature>
<feature type="splice variant" id="VSP_014619" description="In isoform 3." evidence="2">
    <location>
        <begin position="25"/>
        <end position="158"/>
    </location>
</feature>
<feature type="sequence conflict" description="In Ref. 1; BAC87037." evidence="2" ref="1">
    <original>T</original>
    <variation>S</variation>
    <location>
        <position position="187"/>
    </location>
</feature>
<feature type="sequence conflict" description="In Ref. 1; BAC87037." evidence="2" ref="1">
    <original>H</original>
    <variation>P</variation>
    <location>
        <position position="283"/>
    </location>
</feature>
<sequence>MYQPSRGAARRLGPCLRAYQARPQDQLYPGTLPFPPLWPHSTTTTSPSSPLFWSPLPPRLPTQRLPQVPPLPLPQIQALSSAWVVLPPGKGEEGPGPELHSGCLDGLRSLFEGPPCPYPGAWIPFQVPGTAHPSPATPSGDPSMEEHLSVMYERLRQELPKLFLQSHDYSLYSLDVEFINEILNIRTKGRTWYILSLTLCRFLAWNYFAHLRLEVLQLTRHPENWTLQARWRLVGLPVHLLFLRFYKRDKDEHYRTYDAYSTFYLNSSGLICRHRLDKLMPSHSPPTPVKKLLVGALVALGLSEPEPDLNLCSKP</sequence>
<reference key="1">
    <citation type="journal article" date="2004" name="Nat. Genet.">
        <title>Complete sequencing and characterization of 21,243 full-length human cDNAs.</title>
        <authorList>
            <person name="Ota T."/>
            <person name="Suzuki Y."/>
            <person name="Nishikawa T."/>
            <person name="Otsuki T."/>
            <person name="Sugiyama T."/>
            <person name="Irie R."/>
            <person name="Wakamatsu A."/>
            <person name="Hayashi K."/>
            <person name="Sato H."/>
            <person name="Nagai K."/>
            <person name="Kimura K."/>
            <person name="Makita H."/>
            <person name="Sekine M."/>
            <person name="Obayashi M."/>
            <person name="Nishi T."/>
            <person name="Shibahara T."/>
            <person name="Tanaka T."/>
            <person name="Ishii S."/>
            <person name="Yamamoto J."/>
            <person name="Saito K."/>
            <person name="Kawai Y."/>
            <person name="Isono Y."/>
            <person name="Nakamura Y."/>
            <person name="Nagahari K."/>
            <person name="Murakami K."/>
            <person name="Yasuda T."/>
            <person name="Iwayanagi T."/>
            <person name="Wagatsuma M."/>
            <person name="Shiratori A."/>
            <person name="Sudo H."/>
            <person name="Hosoiri T."/>
            <person name="Kaku Y."/>
            <person name="Kodaira H."/>
            <person name="Kondo H."/>
            <person name="Sugawara M."/>
            <person name="Takahashi M."/>
            <person name="Kanda K."/>
            <person name="Yokoi T."/>
            <person name="Furuya T."/>
            <person name="Kikkawa E."/>
            <person name="Omura Y."/>
            <person name="Abe K."/>
            <person name="Kamihara K."/>
            <person name="Katsuta N."/>
            <person name="Sato K."/>
            <person name="Tanikawa M."/>
            <person name="Yamazaki M."/>
            <person name="Ninomiya K."/>
            <person name="Ishibashi T."/>
            <person name="Yamashita H."/>
            <person name="Murakawa K."/>
            <person name="Fujimori K."/>
            <person name="Tanai H."/>
            <person name="Kimata M."/>
            <person name="Watanabe M."/>
            <person name="Hiraoka S."/>
            <person name="Chiba Y."/>
            <person name="Ishida S."/>
            <person name="Ono Y."/>
            <person name="Takiguchi S."/>
            <person name="Watanabe S."/>
            <person name="Yosida M."/>
            <person name="Hotuta T."/>
            <person name="Kusano J."/>
            <person name="Kanehori K."/>
            <person name="Takahashi-Fujii A."/>
            <person name="Hara H."/>
            <person name="Tanase T.-O."/>
            <person name="Nomura Y."/>
            <person name="Togiya S."/>
            <person name="Komai F."/>
            <person name="Hara R."/>
            <person name="Takeuchi K."/>
            <person name="Arita M."/>
            <person name="Imose N."/>
            <person name="Musashino K."/>
            <person name="Yuuki H."/>
            <person name="Oshima A."/>
            <person name="Sasaki N."/>
            <person name="Aotsuka S."/>
            <person name="Yoshikawa Y."/>
            <person name="Matsunawa H."/>
            <person name="Ichihara T."/>
            <person name="Shiohata N."/>
            <person name="Sano S."/>
            <person name="Moriya S."/>
            <person name="Momiyama H."/>
            <person name="Satoh N."/>
            <person name="Takami S."/>
            <person name="Terashima Y."/>
            <person name="Suzuki O."/>
            <person name="Nakagawa S."/>
            <person name="Senoh A."/>
            <person name="Mizoguchi H."/>
            <person name="Goto Y."/>
            <person name="Shimizu F."/>
            <person name="Wakebe H."/>
            <person name="Hishigaki H."/>
            <person name="Watanabe T."/>
            <person name="Sugiyama A."/>
            <person name="Takemoto M."/>
            <person name="Kawakami B."/>
            <person name="Yamazaki M."/>
            <person name="Watanabe K."/>
            <person name="Kumagai A."/>
            <person name="Itakura S."/>
            <person name="Fukuzumi Y."/>
            <person name="Fujimori Y."/>
            <person name="Komiyama M."/>
            <person name="Tashiro H."/>
            <person name="Tanigami A."/>
            <person name="Fujiwara T."/>
            <person name="Ono T."/>
            <person name="Yamada K."/>
            <person name="Fujii Y."/>
            <person name="Ozaki K."/>
            <person name="Hirao M."/>
            <person name="Ohmori Y."/>
            <person name="Kawabata A."/>
            <person name="Hikiji T."/>
            <person name="Kobatake N."/>
            <person name="Inagaki H."/>
            <person name="Ikema Y."/>
            <person name="Okamoto S."/>
            <person name="Okitani R."/>
            <person name="Kawakami T."/>
            <person name="Noguchi S."/>
            <person name="Itoh T."/>
            <person name="Shigeta K."/>
            <person name="Senba T."/>
            <person name="Matsumura K."/>
            <person name="Nakajima Y."/>
            <person name="Mizuno T."/>
            <person name="Morinaga M."/>
            <person name="Sasaki M."/>
            <person name="Togashi T."/>
            <person name="Oyama M."/>
            <person name="Hata H."/>
            <person name="Watanabe M."/>
            <person name="Komatsu T."/>
            <person name="Mizushima-Sugano J."/>
            <person name="Satoh T."/>
            <person name="Shirai Y."/>
            <person name="Takahashi Y."/>
            <person name="Nakagawa K."/>
            <person name="Okumura K."/>
            <person name="Nagase T."/>
            <person name="Nomura N."/>
            <person name="Kikuchi H."/>
            <person name="Masuho Y."/>
            <person name="Yamashita R."/>
            <person name="Nakai K."/>
            <person name="Yada T."/>
            <person name="Nakamura Y."/>
            <person name="Ohara O."/>
            <person name="Isogai T."/>
            <person name="Sugano S."/>
        </authorList>
    </citation>
    <scope>NUCLEOTIDE SEQUENCE [LARGE SCALE MRNA] (ISOFORM 1)</scope>
    <source>
        <tissue>Tongue</tissue>
    </source>
</reference>
<reference key="2">
    <citation type="journal article" date="2003" name="Nature">
        <title>The DNA sequence and analysis of human chromosome 6.</title>
        <authorList>
            <person name="Mungall A.J."/>
            <person name="Palmer S.A."/>
            <person name="Sims S.K."/>
            <person name="Edwards C.A."/>
            <person name="Ashurst J.L."/>
            <person name="Wilming L."/>
            <person name="Jones M.C."/>
            <person name="Horton R."/>
            <person name="Hunt S.E."/>
            <person name="Scott C.E."/>
            <person name="Gilbert J.G.R."/>
            <person name="Clamp M.E."/>
            <person name="Bethel G."/>
            <person name="Milne S."/>
            <person name="Ainscough R."/>
            <person name="Almeida J.P."/>
            <person name="Ambrose K.D."/>
            <person name="Andrews T.D."/>
            <person name="Ashwell R.I.S."/>
            <person name="Babbage A.K."/>
            <person name="Bagguley C.L."/>
            <person name="Bailey J."/>
            <person name="Banerjee R."/>
            <person name="Barker D.J."/>
            <person name="Barlow K.F."/>
            <person name="Bates K."/>
            <person name="Beare D.M."/>
            <person name="Beasley H."/>
            <person name="Beasley O."/>
            <person name="Bird C.P."/>
            <person name="Blakey S.E."/>
            <person name="Bray-Allen S."/>
            <person name="Brook J."/>
            <person name="Brown A.J."/>
            <person name="Brown J.Y."/>
            <person name="Burford D.C."/>
            <person name="Burrill W."/>
            <person name="Burton J."/>
            <person name="Carder C."/>
            <person name="Carter N.P."/>
            <person name="Chapman J.C."/>
            <person name="Clark S.Y."/>
            <person name="Clark G."/>
            <person name="Clee C.M."/>
            <person name="Clegg S."/>
            <person name="Cobley V."/>
            <person name="Collier R.E."/>
            <person name="Collins J.E."/>
            <person name="Colman L.K."/>
            <person name="Corby N.R."/>
            <person name="Coville G.J."/>
            <person name="Culley K.M."/>
            <person name="Dhami P."/>
            <person name="Davies J."/>
            <person name="Dunn M."/>
            <person name="Earthrowl M.E."/>
            <person name="Ellington A.E."/>
            <person name="Evans K.A."/>
            <person name="Faulkner L."/>
            <person name="Francis M.D."/>
            <person name="Frankish A."/>
            <person name="Frankland J."/>
            <person name="French L."/>
            <person name="Garner P."/>
            <person name="Garnett J."/>
            <person name="Ghori M.J."/>
            <person name="Gilby L.M."/>
            <person name="Gillson C.J."/>
            <person name="Glithero R.J."/>
            <person name="Grafham D.V."/>
            <person name="Grant M."/>
            <person name="Gribble S."/>
            <person name="Griffiths C."/>
            <person name="Griffiths M.N.D."/>
            <person name="Hall R."/>
            <person name="Halls K.S."/>
            <person name="Hammond S."/>
            <person name="Harley J.L."/>
            <person name="Hart E.A."/>
            <person name="Heath P.D."/>
            <person name="Heathcott R."/>
            <person name="Holmes S.J."/>
            <person name="Howden P.J."/>
            <person name="Howe K.L."/>
            <person name="Howell G.R."/>
            <person name="Huckle E."/>
            <person name="Humphray S.J."/>
            <person name="Humphries M.D."/>
            <person name="Hunt A.R."/>
            <person name="Johnson C.M."/>
            <person name="Joy A.A."/>
            <person name="Kay M."/>
            <person name="Keenan S.J."/>
            <person name="Kimberley A.M."/>
            <person name="King A."/>
            <person name="Laird G.K."/>
            <person name="Langford C."/>
            <person name="Lawlor S."/>
            <person name="Leongamornlert D.A."/>
            <person name="Leversha M."/>
            <person name="Lloyd C.R."/>
            <person name="Lloyd D.M."/>
            <person name="Loveland J.E."/>
            <person name="Lovell J."/>
            <person name="Martin S."/>
            <person name="Mashreghi-Mohammadi M."/>
            <person name="Maslen G.L."/>
            <person name="Matthews L."/>
            <person name="McCann O.T."/>
            <person name="McLaren S.J."/>
            <person name="McLay K."/>
            <person name="McMurray A."/>
            <person name="Moore M.J.F."/>
            <person name="Mullikin J.C."/>
            <person name="Niblett D."/>
            <person name="Nickerson T."/>
            <person name="Novik K.L."/>
            <person name="Oliver K."/>
            <person name="Overton-Larty E.K."/>
            <person name="Parker A."/>
            <person name="Patel R."/>
            <person name="Pearce A.V."/>
            <person name="Peck A.I."/>
            <person name="Phillimore B.J.C.T."/>
            <person name="Phillips S."/>
            <person name="Plumb R.W."/>
            <person name="Porter K.M."/>
            <person name="Ramsey Y."/>
            <person name="Ranby S.A."/>
            <person name="Rice C.M."/>
            <person name="Ross M.T."/>
            <person name="Searle S.M."/>
            <person name="Sehra H.K."/>
            <person name="Sheridan E."/>
            <person name="Skuce C.D."/>
            <person name="Smith S."/>
            <person name="Smith M."/>
            <person name="Spraggon L."/>
            <person name="Squares S.L."/>
            <person name="Steward C.A."/>
            <person name="Sycamore N."/>
            <person name="Tamlyn-Hall G."/>
            <person name="Tester J."/>
            <person name="Theaker A.J."/>
            <person name="Thomas D.W."/>
            <person name="Thorpe A."/>
            <person name="Tracey A."/>
            <person name="Tromans A."/>
            <person name="Tubby B."/>
            <person name="Wall M."/>
            <person name="Wallis J.M."/>
            <person name="West A.P."/>
            <person name="White S.S."/>
            <person name="Whitehead S.L."/>
            <person name="Whittaker H."/>
            <person name="Wild A."/>
            <person name="Willey D.J."/>
            <person name="Wilmer T.E."/>
            <person name="Wood J.M."/>
            <person name="Wray P.W."/>
            <person name="Wyatt J.C."/>
            <person name="Young L."/>
            <person name="Younger R.M."/>
            <person name="Bentley D.R."/>
            <person name="Coulson A."/>
            <person name="Durbin R.M."/>
            <person name="Hubbard T."/>
            <person name="Sulston J.E."/>
            <person name="Dunham I."/>
            <person name="Rogers J."/>
            <person name="Beck S."/>
        </authorList>
    </citation>
    <scope>NUCLEOTIDE SEQUENCE [LARGE SCALE GENOMIC DNA]</scope>
</reference>
<reference key="3">
    <citation type="journal article" date="2004" name="Genome Res.">
        <title>The status, quality, and expansion of the NIH full-length cDNA project: the Mammalian Gene Collection (MGC).</title>
        <authorList>
            <consortium name="The MGC Project Team"/>
        </authorList>
    </citation>
    <scope>NUCLEOTIDE SEQUENCE [LARGE SCALE MRNA] (ISOFORM 2)</scope>
    <source>
        <tissue>Brain</tissue>
    </source>
</reference>
<gene>
    <name type="primary">C6orf136</name>
</gene>
<comment type="alternative products">
    <event type="alternative splicing"/>
    <isoform>
        <id>Q5SQH8-1</id>
        <name>1</name>
        <sequence type="displayed"/>
    </isoform>
    <isoform>
        <id>Q5SQH8-2</id>
        <name>2</name>
        <sequence type="described" ref="VSP_014618"/>
    </isoform>
    <isoform>
        <id>Q5SQH8-3</id>
        <name>3</name>
        <sequence type="described" ref="VSP_014619"/>
    </isoform>
    <isoform>
        <id>Q5SQH8-4</id>
        <name>4</name>
        <sequence type="described" ref="VSP_046640"/>
    </isoform>
</comment>
<protein>
    <recommendedName>
        <fullName>Uncharacterized protein C6orf136</fullName>
    </recommendedName>
</protein>
<name>CF136_HUMAN</name>
<dbReference type="EMBL" id="AK127564">
    <property type="protein sequence ID" value="BAC87037.1"/>
    <property type="molecule type" value="mRNA"/>
</dbReference>
<dbReference type="EMBL" id="AL662798">
    <property type="status" value="NOT_ANNOTATED_CDS"/>
    <property type="molecule type" value="Genomic_DNA"/>
</dbReference>
<dbReference type="EMBL" id="AL662800">
    <property type="status" value="NOT_ANNOTATED_CDS"/>
    <property type="molecule type" value="Genomic_DNA"/>
</dbReference>
<dbReference type="EMBL" id="AL732442">
    <property type="status" value="NOT_ANNOTATED_CDS"/>
    <property type="molecule type" value="Genomic_DNA"/>
</dbReference>
<dbReference type="EMBL" id="AL845353">
    <property type="status" value="NOT_ANNOTATED_CDS"/>
    <property type="molecule type" value="Genomic_DNA"/>
</dbReference>
<dbReference type="EMBL" id="BX119957">
    <property type="status" value="NOT_ANNOTATED_CDS"/>
    <property type="molecule type" value="Genomic_DNA"/>
</dbReference>
<dbReference type="EMBL" id="BX908728">
    <property type="status" value="NOT_ANNOTATED_CDS"/>
    <property type="molecule type" value="Genomic_DNA"/>
</dbReference>
<dbReference type="EMBL" id="CR753328">
    <property type="status" value="NOT_ANNOTATED_CDS"/>
    <property type="molecule type" value="Genomic_DNA"/>
</dbReference>
<dbReference type="EMBL" id="CR759778">
    <property type="status" value="NOT_ANNOTATED_CDS"/>
    <property type="molecule type" value="Genomic_DNA"/>
</dbReference>
<dbReference type="EMBL" id="BC016167">
    <property type="protein sequence ID" value="AAH16167.1"/>
    <property type="molecule type" value="mRNA"/>
</dbReference>
<dbReference type="CCDS" id="CCDS43443.1">
    <molecule id="Q5SQH8-1"/>
</dbReference>
<dbReference type="CCDS" id="CCDS4684.2">
    <molecule id="Q5SQH8-3"/>
</dbReference>
<dbReference type="CCDS" id="CCDS54979.1">
    <molecule id="Q5SQH8-4"/>
</dbReference>
<dbReference type="RefSeq" id="NP_001103408.1">
    <molecule id="Q5SQH8-1"/>
    <property type="nucleotide sequence ID" value="NM_001109938.3"/>
</dbReference>
<dbReference type="RefSeq" id="NP_001154848.1">
    <molecule id="Q5SQH8-4"/>
    <property type="nucleotide sequence ID" value="NM_001161376.2"/>
</dbReference>
<dbReference type="RefSeq" id="NP_659466.2">
    <molecule id="Q5SQH8-3"/>
    <property type="nucleotide sequence ID" value="NM_145029.4"/>
</dbReference>
<dbReference type="RefSeq" id="XP_011512686.1">
    <molecule id="Q5SQH8-2"/>
    <property type="nucleotide sequence ID" value="XM_011514384.3"/>
</dbReference>
<dbReference type="RefSeq" id="XP_054185724.1">
    <molecule id="Q5SQH8-2"/>
    <property type="nucleotide sequence ID" value="XM_054329749.1"/>
</dbReference>
<dbReference type="RefSeq" id="XP_054186216.1">
    <molecule id="Q5SQH8-2"/>
    <property type="nucleotide sequence ID" value="XM_054330241.1"/>
</dbReference>
<dbReference type="RefSeq" id="XP_054186507.1">
    <molecule id="Q5SQH8-2"/>
    <property type="nucleotide sequence ID" value="XM_054330532.1"/>
</dbReference>
<dbReference type="RefSeq" id="XP_054186759.1">
    <molecule id="Q5SQH8-2"/>
    <property type="nucleotide sequence ID" value="XM_054330784.1"/>
</dbReference>
<dbReference type="RefSeq" id="XP_054186996.1">
    <molecule id="Q5SQH8-2"/>
    <property type="nucleotide sequence ID" value="XM_054331021.1"/>
</dbReference>
<dbReference type="RefSeq" id="XP_054187262.1">
    <molecule id="Q5SQH8-2"/>
    <property type="nucleotide sequence ID" value="XM_054331287.1"/>
</dbReference>
<dbReference type="RefSeq" id="XP_054210574.1">
    <molecule id="Q5SQH8-2"/>
    <property type="nucleotide sequence ID" value="XM_054354599.1"/>
</dbReference>
<dbReference type="BioGRID" id="128738">
    <property type="interactions" value="14"/>
</dbReference>
<dbReference type="FunCoup" id="Q5SQH8">
    <property type="interactions" value="19"/>
</dbReference>
<dbReference type="IntAct" id="Q5SQH8">
    <property type="interactions" value="6"/>
</dbReference>
<dbReference type="MINT" id="Q5SQH8"/>
<dbReference type="STRING" id="9606.ENSP00000293604"/>
<dbReference type="GlyGen" id="Q5SQH8">
    <property type="glycosylation" value="1 site"/>
</dbReference>
<dbReference type="iPTMnet" id="Q5SQH8"/>
<dbReference type="PhosphoSitePlus" id="Q5SQH8"/>
<dbReference type="BioMuta" id="C6orf136"/>
<dbReference type="DMDM" id="71658797"/>
<dbReference type="jPOST" id="Q5SQH8"/>
<dbReference type="MassIVE" id="Q5SQH8"/>
<dbReference type="PaxDb" id="9606-ENSP00000293604"/>
<dbReference type="PeptideAtlas" id="Q5SQH8"/>
<dbReference type="ProteomicsDB" id="29053"/>
<dbReference type="ProteomicsDB" id="63798">
    <molecule id="Q5SQH8-1"/>
</dbReference>
<dbReference type="ProteomicsDB" id="63799">
    <molecule id="Q5SQH8-2"/>
</dbReference>
<dbReference type="ProteomicsDB" id="63800">
    <molecule id="Q5SQH8-3"/>
</dbReference>
<dbReference type="Antibodypedia" id="55864">
    <property type="antibodies" value="89 antibodies from 14 providers"/>
</dbReference>
<dbReference type="DNASU" id="221545"/>
<dbReference type="Ensembl" id="ENST00000293604.10">
    <molecule id="Q5SQH8-4"/>
    <property type="protein sequence ID" value="ENSP00000293604.6"/>
    <property type="gene ID" value="ENSG00000204564.12"/>
</dbReference>
<dbReference type="Ensembl" id="ENST00000376471.8">
    <molecule id="Q5SQH8-3"/>
    <property type="protein sequence ID" value="ENSP00000365654.4"/>
    <property type="gene ID" value="ENSG00000204564.12"/>
</dbReference>
<dbReference type="Ensembl" id="ENST00000376473.9">
    <molecule id="Q5SQH8-1"/>
    <property type="protein sequence ID" value="ENSP00000365656.5"/>
    <property type="gene ID" value="ENSG00000204564.12"/>
</dbReference>
<dbReference type="Ensembl" id="ENST00000383580.8">
    <molecule id="Q5SQH8-3"/>
    <property type="protein sequence ID" value="ENSP00000373074.4"/>
    <property type="gene ID" value="ENSG00000206487.11"/>
</dbReference>
<dbReference type="Ensembl" id="ENST00000383581.8">
    <molecule id="Q5SQH8-1"/>
    <property type="protein sequence ID" value="ENSP00000373075.4"/>
    <property type="gene ID" value="ENSG00000206487.11"/>
</dbReference>
<dbReference type="Ensembl" id="ENST00000415931.6">
    <molecule id="Q5SQH8-3"/>
    <property type="protein sequence ID" value="ENSP00000402805.2"/>
    <property type="gene ID" value="ENSG00000233164.9"/>
</dbReference>
<dbReference type="Ensembl" id="ENST00000417076.6">
    <molecule id="Q5SQH8-3"/>
    <property type="protein sequence ID" value="ENSP00000405594.2"/>
    <property type="gene ID" value="ENSG00000237100.9"/>
</dbReference>
<dbReference type="Ensembl" id="ENST00000417649.6">
    <molecule id="Q5SQH8-3"/>
    <property type="protein sequence ID" value="ENSP00000395979.2"/>
    <property type="gene ID" value="ENSG00000233641.9"/>
</dbReference>
<dbReference type="Ensembl" id="ENST00000419321.6">
    <molecule id="Q5SQH8-1"/>
    <property type="protein sequence ID" value="ENSP00000398769.2"/>
    <property type="gene ID" value="ENSG00000237100.9"/>
</dbReference>
<dbReference type="Ensembl" id="ENST00000422530.6">
    <molecule id="Q5SQH8-1"/>
    <property type="protein sequence ID" value="ENSP00000390275.2"/>
    <property type="gene ID" value="ENSG00000237012.9"/>
</dbReference>
<dbReference type="Ensembl" id="ENST00000425581.6">
    <molecule id="Q5SQH8-1"/>
    <property type="protein sequence ID" value="ENSP00000404588.2"/>
    <property type="gene ID" value="ENSG00000233641.9"/>
</dbReference>
<dbReference type="Ensembl" id="ENST00000430141.6">
    <molecule id="Q5SQH8-1"/>
    <property type="protein sequence ID" value="ENSP00000396916.2"/>
    <property type="gene ID" value="ENSG00000224120.9"/>
</dbReference>
<dbReference type="Ensembl" id="ENST00000447505.6">
    <molecule id="Q5SQH8-1"/>
    <property type="protein sequence ID" value="ENSP00000415915.2"/>
    <property type="gene ID" value="ENSG00000233164.9"/>
</dbReference>
<dbReference type="Ensembl" id="ENST00000455682.2">
    <molecule id="Q5SQH8-3"/>
    <property type="protein sequence ID" value="ENSP00000391657.2"/>
    <property type="gene ID" value="ENSG00000224120.9"/>
</dbReference>
<dbReference type="Ensembl" id="ENST00000456444.6">
    <molecule id="Q5SQH8-3"/>
    <property type="protein sequence ID" value="ENSP00000387592.2"/>
    <property type="gene ID" value="ENSG00000237012.9"/>
</dbReference>
<dbReference type="Ensembl" id="ENST00000651131.1">
    <molecule id="Q5SQH8-4"/>
    <property type="protein sequence ID" value="ENSP00000499201.1"/>
    <property type="gene ID" value="ENSG00000204564.12"/>
</dbReference>
<dbReference type="GeneID" id="221545"/>
<dbReference type="KEGG" id="hsa:221545"/>
<dbReference type="MANE-Select" id="ENST00000651131.1">
    <molecule id="Q5SQH8-4"/>
    <property type="protein sequence ID" value="ENSP00000499201.1"/>
    <property type="RefSeq nucleotide sequence ID" value="NM_001161376.2"/>
    <property type="RefSeq protein sequence ID" value="NP_001154848.1"/>
</dbReference>
<dbReference type="UCSC" id="uc003nqw.5">
    <molecule id="Q5SQH8-1"/>
    <property type="organism name" value="human"/>
</dbReference>
<dbReference type="AGR" id="HGNC:21301"/>
<dbReference type="CTD" id="221545"/>
<dbReference type="DisGeNET" id="221545"/>
<dbReference type="GeneCards" id="C6orf136"/>
<dbReference type="HGNC" id="HGNC:21301">
    <property type="gene designation" value="C6orf136"/>
</dbReference>
<dbReference type="HPA" id="ENSG00000204564">
    <property type="expression patterns" value="Low tissue specificity"/>
</dbReference>
<dbReference type="neXtProt" id="NX_Q5SQH8"/>
<dbReference type="OpenTargets" id="ENSG00000204564"/>
<dbReference type="PharmGKB" id="PA134962744"/>
<dbReference type="VEuPathDB" id="HostDB:ENSG00000204564"/>
<dbReference type="eggNOG" id="KOG4457">
    <property type="taxonomic scope" value="Eukaryota"/>
</dbReference>
<dbReference type="GeneTree" id="ENSGT00390000008658"/>
<dbReference type="HOGENOM" id="CLU_555426_0_0_1"/>
<dbReference type="InParanoid" id="Q5SQH8"/>
<dbReference type="OMA" id="PGALMPF"/>
<dbReference type="OrthoDB" id="44820at2759"/>
<dbReference type="PAN-GO" id="Q5SQH8">
    <property type="GO annotations" value="0 GO annotations based on evolutionary models"/>
</dbReference>
<dbReference type="PhylomeDB" id="Q5SQH8"/>
<dbReference type="TreeFam" id="TF313961"/>
<dbReference type="PathwayCommons" id="Q5SQH8"/>
<dbReference type="SignaLink" id="Q5SQH8"/>
<dbReference type="BioGRID-ORCS" id="221545">
    <property type="hits" value="40 hits in 1150 CRISPR screens"/>
</dbReference>
<dbReference type="GenomeRNAi" id="221545"/>
<dbReference type="Pharos" id="Q5SQH8">
    <property type="development level" value="Tdark"/>
</dbReference>
<dbReference type="PRO" id="PR:Q5SQH8"/>
<dbReference type="Proteomes" id="UP000005640">
    <property type="component" value="Chromosome 6"/>
</dbReference>
<dbReference type="RNAct" id="Q5SQH8">
    <property type="molecule type" value="protein"/>
</dbReference>
<dbReference type="Bgee" id="ENSG00000204564">
    <property type="expression patterns" value="Expressed in mucosa of transverse colon and 97 other cell types or tissues"/>
</dbReference>
<dbReference type="ExpressionAtlas" id="Q5SQH8">
    <property type="expression patterns" value="baseline and differential"/>
</dbReference>
<dbReference type="InterPro" id="IPR018790">
    <property type="entry name" value="DUF2358"/>
</dbReference>
<dbReference type="PANTHER" id="PTHR31094">
    <property type="entry name" value="RIKEN CDNA 2310061I04 GENE"/>
    <property type="match status" value="1"/>
</dbReference>
<dbReference type="PANTHER" id="PTHR31094:SF2">
    <property type="entry name" value="RIKEN CDNA 2310061I04 GENE"/>
    <property type="match status" value="1"/>
</dbReference>
<dbReference type="Pfam" id="PF10184">
    <property type="entry name" value="DUF2358"/>
    <property type="match status" value="1"/>
</dbReference>
<proteinExistence type="evidence at protein level"/>
<accession>Q5SQH8</accession>
<accession>A9R9P9</accession>
<accession>F8VX15</accession>
<accession>Q5SU01</accession>
<accession>Q6ZSB7</accession>
<accession>Q8TB84</accession>
<organism>
    <name type="scientific">Homo sapiens</name>
    <name type="common">Human</name>
    <dbReference type="NCBI Taxonomy" id="9606"/>
    <lineage>
        <taxon>Eukaryota</taxon>
        <taxon>Metazoa</taxon>
        <taxon>Chordata</taxon>
        <taxon>Craniata</taxon>
        <taxon>Vertebrata</taxon>
        <taxon>Euteleostomi</taxon>
        <taxon>Mammalia</taxon>
        <taxon>Eutheria</taxon>
        <taxon>Euarchontoglires</taxon>
        <taxon>Primates</taxon>
        <taxon>Haplorrhini</taxon>
        <taxon>Catarrhini</taxon>
        <taxon>Hominidae</taxon>
        <taxon>Homo</taxon>
    </lineage>
</organism>
<evidence type="ECO:0000303" key="1">
    <source>
    </source>
</evidence>
<evidence type="ECO:0000305" key="2"/>